<proteinExistence type="inferred from homology"/>
<name>ATPB_VIBCM</name>
<protein>
    <recommendedName>
        <fullName evidence="1">ATP synthase subunit beta</fullName>
        <ecNumber evidence="1">7.1.2.2</ecNumber>
    </recommendedName>
    <alternativeName>
        <fullName evidence="1">ATP synthase F1 sector subunit beta</fullName>
    </alternativeName>
    <alternativeName>
        <fullName evidence="1">F-ATPase subunit beta</fullName>
    </alternativeName>
</protein>
<dbReference type="EC" id="7.1.2.2" evidence="1"/>
<dbReference type="EMBL" id="CP001233">
    <property type="protein sequence ID" value="ACP06976.1"/>
    <property type="molecule type" value="Genomic_DNA"/>
</dbReference>
<dbReference type="RefSeq" id="WP_000190491.1">
    <property type="nucleotide sequence ID" value="NC_012578.1"/>
</dbReference>
<dbReference type="SMR" id="C3LSI9"/>
<dbReference type="GeneID" id="69721148"/>
<dbReference type="KEGG" id="vcm:VCM66_2684"/>
<dbReference type="HOGENOM" id="CLU_022398_0_2_6"/>
<dbReference type="Proteomes" id="UP000001217">
    <property type="component" value="Chromosome I"/>
</dbReference>
<dbReference type="GO" id="GO:0005886">
    <property type="term" value="C:plasma membrane"/>
    <property type="evidence" value="ECO:0007669"/>
    <property type="project" value="UniProtKB-SubCell"/>
</dbReference>
<dbReference type="GO" id="GO:0045259">
    <property type="term" value="C:proton-transporting ATP synthase complex"/>
    <property type="evidence" value="ECO:0007669"/>
    <property type="project" value="UniProtKB-KW"/>
</dbReference>
<dbReference type="GO" id="GO:0005524">
    <property type="term" value="F:ATP binding"/>
    <property type="evidence" value="ECO:0007669"/>
    <property type="project" value="UniProtKB-UniRule"/>
</dbReference>
<dbReference type="GO" id="GO:0016887">
    <property type="term" value="F:ATP hydrolysis activity"/>
    <property type="evidence" value="ECO:0007669"/>
    <property type="project" value="InterPro"/>
</dbReference>
<dbReference type="GO" id="GO:0046933">
    <property type="term" value="F:proton-transporting ATP synthase activity, rotational mechanism"/>
    <property type="evidence" value="ECO:0007669"/>
    <property type="project" value="UniProtKB-UniRule"/>
</dbReference>
<dbReference type="CDD" id="cd18110">
    <property type="entry name" value="ATP-synt_F1_beta_C"/>
    <property type="match status" value="1"/>
</dbReference>
<dbReference type="CDD" id="cd18115">
    <property type="entry name" value="ATP-synt_F1_beta_N"/>
    <property type="match status" value="1"/>
</dbReference>
<dbReference type="CDD" id="cd01133">
    <property type="entry name" value="F1-ATPase_beta_CD"/>
    <property type="match status" value="1"/>
</dbReference>
<dbReference type="FunFam" id="1.10.1140.10:FF:000001">
    <property type="entry name" value="ATP synthase subunit beta"/>
    <property type="match status" value="1"/>
</dbReference>
<dbReference type="FunFam" id="2.40.10.170:FF:000003">
    <property type="entry name" value="ATP synthase subunit beta"/>
    <property type="match status" value="1"/>
</dbReference>
<dbReference type="FunFam" id="3.40.50.300:FF:000004">
    <property type="entry name" value="ATP synthase subunit beta"/>
    <property type="match status" value="1"/>
</dbReference>
<dbReference type="Gene3D" id="2.40.10.170">
    <property type="match status" value="1"/>
</dbReference>
<dbReference type="Gene3D" id="1.10.1140.10">
    <property type="entry name" value="Bovine Mitochondrial F1-atpase, Atp Synthase Beta Chain, Chain D, domain 3"/>
    <property type="match status" value="1"/>
</dbReference>
<dbReference type="Gene3D" id="3.40.50.300">
    <property type="entry name" value="P-loop containing nucleotide triphosphate hydrolases"/>
    <property type="match status" value="1"/>
</dbReference>
<dbReference type="HAMAP" id="MF_01347">
    <property type="entry name" value="ATP_synth_beta_bact"/>
    <property type="match status" value="1"/>
</dbReference>
<dbReference type="InterPro" id="IPR003593">
    <property type="entry name" value="AAA+_ATPase"/>
</dbReference>
<dbReference type="InterPro" id="IPR055190">
    <property type="entry name" value="ATP-synt_VA_C"/>
</dbReference>
<dbReference type="InterPro" id="IPR005722">
    <property type="entry name" value="ATP_synth_F1_bsu"/>
</dbReference>
<dbReference type="InterPro" id="IPR020003">
    <property type="entry name" value="ATPase_a/bsu_AS"/>
</dbReference>
<dbReference type="InterPro" id="IPR050053">
    <property type="entry name" value="ATPase_alpha/beta_chains"/>
</dbReference>
<dbReference type="InterPro" id="IPR004100">
    <property type="entry name" value="ATPase_F1/V1/A1_a/bsu_N"/>
</dbReference>
<dbReference type="InterPro" id="IPR036121">
    <property type="entry name" value="ATPase_F1/V1/A1_a/bsu_N_sf"/>
</dbReference>
<dbReference type="InterPro" id="IPR000194">
    <property type="entry name" value="ATPase_F1/V1/A1_a/bsu_nucl-bd"/>
</dbReference>
<dbReference type="InterPro" id="IPR024034">
    <property type="entry name" value="ATPase_F1/V1_b/a_C"/>
</dbReference>
<dbReference type="InterPro" id="IPR027417">
    <property type="entry name" value="P-loop_NTPase"/>
</dbReference>
<dbReference type="NCBIfam" id="TIGR01039">
    <property type="entry name" value="atpD"/>
    <property type="match status" value="1"/>
</dbReference>
<dbReference type="PANTHER" id="PTHR15184">
    <property type="entry name" value="ATP SYNTHASE"/>
    <property type="match status" value="1"/>
</dbReference>
<dbReference type="PANTHER" id="PTHR15184:SF71">
    <property type="entry name" value="ATP SYNTHASE SUBUNIT BETA, MITOCHONDRIAL"/>
    <property type="match status" value="1"/>
</dbReference>
<dbReference type="Pfam" id="PF00006">
    <property type="entry name" value="ATP-synt_ab"/>
    <property type="match status" value="1"/>
</dbReference>
<dbReference type="Pfam" id="PF02874">
    <property type="entry name" value="ATP-synt_ab_N"/>
    <property type="match status" value="1"/>
</dbReference>
<dbReference type="Pfam" id="PF22919">
    <property type="entry name" value="ATP-synt_VA_C"/>
    <property type="match status" value="1"/>
</dbReference>
<dbReference type="SMART" id="SM00382">
    <property type="entry name" value="AAA"/>
    <property type="match status" value="1"/>
</dbReference>
<dbReference type="SUPFAM" id="SSF47917">
    <property type="entry name" value="C-terminal domain of alpha and beta subunits of F1 ATP synthase"/>
    <property type="match status" value="1"/>
</dbReference>
<dbReference type="SUPFAM" id="SSF50615">
    <property type="entry name" value="N-terminal domain of alpha and beta subunits of F1 ATP synthase"/>
    <property type="match status" value="1"/>
</dbReference>
<dbReference type="SUPFAM" id="SSF52540">
    <property type="entry name" value="P-loop containing nucleoside triphosphate hydrolases"/>
    <property type="match status" value="1"/>
</dbReference>
<dbReference type="PROSITE" id="PS00152">
    <property type="entry name" value="ATPASE_ALPHA_BETA"/>
    <property type="match status" value="1"/>
</dbReference>
<keyword id="KW-0066">ATP synthesis</keyword>
<keyword id="KW-0067">ATP-binding</keyword>
<keyword id="KW-0997">Cell inner membrane</keyword>
<keyword id="KW-1003">Cell membrane</keyword>
<keyword id="KW-0139">CF(1)</keyword>
<keyword id="KW-0375">Hydrogen ion transport</keyword>
<keyword id="KW-0406">Ion transport</keyword>
<keyword id="KW-0472">Membrane</keyword>
<keyword id="KW-0547">Nucleotide-binding</keyword>
<keyword id="KW-1278">Translocase</keyword>
<keyword id="KW-0813">Transport</keyword>
<gene>
    <name evidence="1" type="primary">atpD</name>
    <name type="ordered locus">VCM66_2684</name>
</gene>
<comment type="function">
    <text evidence="1">Produces ATP from ADP in the presence of a proton gradient across the membrane. The catalytic sites are hosted primarily by the beta subunits.</text>
</comment>
<comment type="catalytic activity">
    <reaction evidence="1">
        <text>ATP + H2O + 4 H(+)(in) = ADP + phosphate + 5 H(+)(out)</text>
        <dbReference type="Rhea" id="RHEA:57720"/>
        <dbReference type="ChEBI" id="CHEBI:15377"/>
        <dbReference type="ChEBI" id="CHEBI:15378"/>
        <dbReference type="ChEBI" id="CHEBI:30616"/>
        <dbReference type="ChEBI" id="CHEBI:43474"/>
        <dbReference type="ChEBI" id="CHEBI:456216"/>
        <dbReference type="EC" id="7.1.2.2"/>
    </reaction>
</comment>
<comment type="subunit">
    <text evidence="1">F-type ATPases have 2 components, CF(1) - the catalytic core - and CF(0) - the membrane proton channel. CF(1) has five subunits: alpha(3), beta(3), gamma(1), delta(1), epsilon(1). CF(0) has three main subunits: a(1), b(2) and c(9-12). The alpha and beta chains form an alternating ring which encloses part of the gamma chain. CF(1) is attached to CF(0) by a central stalk formed by the gamma and epsilon chains, while a peripheral stalk is formed by the delta and b chains.</text>
</comment>
<comment type="subcellular location">
    <subcellularLocation>
        <location evidence="1">Cell inner membrane</location>
        <topology evidence="1">Peripheral membrane protein</topology>
    </subcellularLocation>
</comment>
<comment type="similarity">
    <text evidence="1">Belongs to the ATPase alpha/beta chains family.</text>
</comment>
<sequence>MATGKIVQIIGAVVDVEFPQSEVPSVYDALNVVDSKERLVLEVQQQLGGGVIRAIVMGSSDGLRRGMTVQNTGAPISVPVGTKTLGRIMNVLGDAIDERGDIGAEEVYSIHRPAPSYEEQSSATELLETGVKVIDLICPFAKGGKIGLFGGAGVGKTVNMMELINNIALQHSGLSVFAGVGERTREGNDFYHEMQEAGVVNVEQPELSKVAMVYGQMNEPPGNRLRVALTGLTMAEKFRDEGRDVLLFIDNIYRYTLAGTEVSALLGRMPSAVGYQPTLAEEMGVLQERITSTKKGSITSVQAVYVPADDLTDPSPATTFAHLDATVVLNRNIAAMGLYPAIDPLDSTSRQLDPLVVGQEHYDVARGVQATLQRYKELKDIIAILGMDELSEADKQVVARARKIERFLTQPYHVAEVFTGDPGVYVPLKETLRGFKGLLAGDYDDIPEQAFMYCGTIDDAIENAKKL</sequence>
<reference key="1">
    <citation type="journal article" date="2008" name="PLoS ONE">
        <title>A recalibrated molecular clock and independent origins for the cholera pandemic clones.</title>
        <authorList>
            <person name="Feng L."/>
            <person name="Reeves P.R."/>
            <person name="Lan R."/>
            <person name="Ren Y."/>
            <person name="Gao C."/>
            <person name="Zhou Z."/>
            <person name="Ren Y."/>
            <person name="Cheng J."/>
            <person name="Wang W."/>
            <person name="Wang J."/>
            <person name="Qian W."/>
            <person name="Li D."/>
            <person name="Wang L."/>
        </authorList>
    </citation>
    <scope>NUCLEOTIDE SEQUENCE [LARGE SCALE GENOMIC DNA]</scope>
    <source>
        <strain>M66-2</strain>
    </source>
</reference>
<feature type="chain" id="PRO_1000166613" description="ATP synthase subunit beta">
    <location>
        <begin position="1"/>
        <end position="467"/>
    </location>
</feature>
<feature type="binding site" evidence="1">
    <location>
        <begin position="150"/>
        <end position="157"/>
    </location>
    <ligand>
        <name>ATP</name>
        <dbReference type="ChEBI" id="CHEBI:30616"/>
    </ligand>
</feature>
<accession>C3LSI9</accession>
<organism>
    <name type="scientific">Vibrio cholerae serotype O1 (strain M66-2)</name>
    <dbReference type="NCBI Taxonomy" id="579112"/>
    <lineage>
        <taxon>Bacteria</taxon>
        <taxon>Pseudomonadati</taxon>
        <taxon>Pseudomonadota</taxon>
        <taxon>Gammaproteobacteria</taxon>
        <taxon>Vibrionales</taxon>
        <taxon>Vibrionaceae</taxon>
        <taxon>Vibrio</taxon>
    </lineage>
</organism>
<evidence type="ECO:0000255" key="1">
    <source>
        <dbReference type="HAMAP-Rule" id="MF_01347"/>
    </source>
</evidence>